<organism>
    <name type="scientific">Porphyromonas gingivalis (strain ATCC BAA-308 / W83)</name>
    <dbReference type="NCBI Taxonomy" id="242619"/>
    <lineage>
        <taxon>Bacteria</taxon>
        <taxon>Pseudomonadati</taxon>
        <taxon>Bacteroidota</taxon>
        <taxon>Bacteroidia</taxon>
        <taxon>Bacteroidales</taxon>
        <taxon>Porphyromonadaceae</taxon>
        <taxon>Porphyromonas</taxon>
    </lineage>
</organism>
<protein>
    <recommendedName>
        <fullName evidence="1">Probable transaldolase</fullName>
        <ecNumber evidence="1">2.2.1.2</ecNumber>
    </recommendedName>
</protein>
<evidence type="ECO:0000255" key="1">
    <source>
        <dbReference type="HAMAP-Rule" id="MF_00494"/>
    </source>
</evidence>
<proteinExistence type="inferred from homology"/>
<accession>Q7MXG0</accession>
<sequence length="220" mass="23890">MKFFIDTANLDQIREANDMGVLDGVTTNPSLMAKEGISGKDNCMRHYLAICEIVDGDVSAEVIATDYEGMIREGEELAALHPQIVVKVPCTAEGIKAIKYFSDKGIRTNCTLIFTVGQALLAAKAGASYVSPFVGRLDDIASDGIKLVENIVAMFGFYRYETEVLAASIRHTQHIIQCLEAGADVATCPLNAIKGLLKHPLTDSGLKAFLEDHRRVNEGK</sequence>
<comment type="function">
    <text evidence="1">Transaldolase is important for the balance of metabolites in the pentose-phosphate pathway.</text>
</comment>
<comment type="catalytic activity">
    <reaction evidence="1">
        <text>D-sedoheptulose 7-phosphate + D-glyceraldehyde 3-phosphate = D-erythrose 4-phosphate + beta-D-fructose 6-phosphate</text>
        <dbReference type="Rhea" id="RHEA:17053"/>
        <dbReference type="ChEBI" id="CHEBI:16897"/>
        <dbReference type="ChEBI" id="CHEBI:57483"/>
        <dbReference type="ChEBI" id="CHEBI:57634"/>
        <dbReference type="ChEBI" id="CHEBI:59776"/>
        <dbReference type="EC" id="2.2.1.2"/>
    </reaction>
</comment>
<comment type="pathway">
    <text evidence="1">Carbohydrate degradation; pentose phosphate pathway; D-glyceraldehyde 3-phosphate and beta-D-fructose 6-phosphate from D-ribose 5-phosphate and D-xylulose 5-phosphate (non-oxidative stage): step 2/3.</text>
</comment>
<comment type="subcellular location">
    <subcellularLocation>
        <location evidence="1">Cytoplasm</location>
    </subcellularLocation>
</comment>
<comment type="similarity">
    <text evidence="1">Belongs to the transaldolase family. Type 3B subfamily.</text>
</comment>
<keyword id="KW-0963">Cytoplasm</keyword>
<keyword id="KW-0570">Pentose shunt</keyword>
<keyword id="KW-1185">Reference proteome</keyword>
<keyword id="KW-0704">Schiff base</keyword>
<keyword id="KW-0808">Transferase</keyword>
<dbReference type="EC" id="2.2.1.2" evidence="1"/>
<dbReference type="EMBL" id="AE015924">
    <property type="protein sequence ID" value="AAQ65460.1"/>
    <property type="molecule type" value="Genomic_DNA"/>
</dbReference>
<dbReference type="RefSeq" id="WP_004583877.1">
    <property type="nucleotide sequence ID" value="NC_002950.2"/>
</dbReference>
<dbReference type="SMR" id="Q7MXG0"/>
<dbReference type="STRING" id="242619.PG_0230"/>
<dbReference type="EnsemblBacteria" id="AAQ65460">
    <property type="protein sequence ID" value="AAQ65460"/>
    <property type="gene ID" value="PG_0230"/>
</dbReference>
<dbReference type="GeneID" id="29255578"/>
<dbReference type="KEGG" id="pgi:PG_0230"/>
<dbReference type="eggNOG" id="COG0176">
    <property type="taxonomic scope" value="Bacteria"/>
</dbReference>
<dbReference type="HOGENOM" id="CLU_079764_0_0_10"/>
<dbReference type="UniPathway" id="UPA00115">
    <property type="reaction ID" value="UER00414"/>
</dbReference>
<dbReference type="Proteomes" id="UP000000588">
    <property type="component" value="Chromosome"/>
</dbReference>
<dbReference type="GO" id="GO:0005737">
    <property type="term" value="C:cytoplasm"/>
    <property type="evidence" value="ECO:0007669"/>
    <property type="project" value="UniProtKB-SubCell"/>
</dbReference>
<dbReference type="GO" id="GO:0016832">
    <property type="term" value="F:aldehyde-lyase activity"/>
    <property type="evidence" value="ECO:0007669"/>
    <property type="project" value="InterPro"/>
</dbReference>
<dbReference type="GO" id="GO:0004801">
    <property type="term" value="F:transaldolase activity"/>
    <property type="evidence" value="ECO:0007669"/>
    <property type="project" value="UniProtKB-UniRule"/>
</dbReference>
<dbReference type="GO" id="GO:0005975">
    <property type="term" value="P:carbohydrate metabolic process"/>
    <property type="evidence" value="ECO:0007669"/>
    <property type="project" value="InterPro"/>
</dbReference>
<dbReference type="GO" id="GO:0006098">
    <property type="term" value="P:pentose-phosphate shunt"/>
    <property type="evidence" value="ECO:0007669"/>
    <property type="project" value="UniProtKB-UniRule"/>
</dbReference>
<dbReference type="CDD" id="cd00956">
    <property type="entry name" value="Transaldolase_FSA"/>
    <property type="match status" value="1"/>
</dbReference>
<dbReference type="FunFam" id="3.20.20.70:FF:000018">
    <property type="entry name" value="Probable transaldolase"/>
    <property type="match status" value="1"/>
</dbReference>
<dbReference type="Gene3D" id="3.20.20.70">
    <property type="entry name" value="Aldolase class I"/>
    <property type="match status" value="1"/>
</dbReference>
<dbReference type="HAMAP" id="MF_00494">
    <property type="entry name" value="Transaldolase_3b"/>
    <property type="match status" value="1"/>
</dbReference>
<dbReference type="InterPro" id="IPR013785">
    <property type="entry name" value="Aldolase_TIM"/>
</dbReference>
<dbReference type="InterPro" id="IPR001585">
    <property type="entry name" value="TAL/FSA"/>
</dbReference>
<dbReference type="InterPro" id="IPR022999">
    <property type="entry name" value="Transaldolase_3B"/>
</dbReference>
<dbReference type="InterPro" id="IPR004731">
    <property type="entry name" value="Transaldolase_3B/F6P_aldolase"/>
</dbReference>
<dbReference type="InterPro" id="IPR018225">
    <property type="entry name" value="Transaldolase_AS"/>
</dbReference>
<dbReference type="InterPro" id="IPR033919">
    <property type="entry name" value="TSA/FSA_arc/bac"/>
</dbReference>
<dbReference type="NCBIfam" id="TIGR00875">
    <property type="entry name" value="fsa_talC_mipB"/>
    <property type="match status" value="1"/>
</dbReference>
<dbReference type="PANTHER" id="PTHR10683:SF40">
    <property type="entry name" value="FRUCTOSE-6-PHOSPHATE ALDOLASE 1-RELATED"/>
    <property type="match status" value="1"/>
</dbReference>
<dbReference type="PANTHER" id="PTHR10683">
    <property type="entry name" value="TRANSALDOLASE"/>
    <property type="match status" value="1"/>
</dbReference>
<dbReference type="Pfam" id="PF00923">
    <property type="entry name" value="TAL_FSA"/>
    <property type="match status" value="1"/>
</dbReference>
<dbReference type="SUPFAM" id="SSF51569">
    <property type="entry name" value="Aldolase"/>
    <property type="match status" value="1"/>
</dbReference>
<dbReference type="PROSITE" id="PS01054">
    <property type="entry name" value="TRANSALDOLASE_1"/>
    <property type="match status" value="1"/>
</dbReference>
<dbReference type="PROSITE" id="PS00958">
    <property type="entry name" value="TRANSALDOLASE_2"/>
    <property type="match status" value="1"/>
</dbReference>
<feature type="chain" id="PRO_0000173678" description="Probable transaldolase">
    <location>
        <begin position="1"/>
        <end position="220"/>
    </location>
</feature>
<feature type="active site" description="Schiff-base intermediate with substrate" evidence="1">
    <location>
        <position position="87"/>
    </location>
</feature>
<name>TAL_PORGI</name>
<reference key="1">
    <citation type="journal article" date="2003" name="J. Bacteriol.">
        <title>Complete genome sequence of the oral pathogenic bacterium Porphyromonas gingivalis strain W83.</title>
        <authorList>
            <person name="Nelson K.E."/>
            <person name="Fleischmann R.D."/>
            <person name="DeBoy R.T."/>
            <person name="Paulsen I.T."/>
            <person name="Fouts D.E."/>
            <person name="Eisen J.A."/>
            <person name="Daugherty S.C."/>
            <person name="Dodson R.J."/>
            <person name="Durkin A.S."/>
            <person name="Gwinn M.L."/>
            <person name="Haft D.H."/>
            <person name="Kolonay J.F."/>
            <person name="Nelson W.C."/>
            <person name="Mason T.M."/>
            <person name="Tallon L."/>
            <person name="Gray J."/>
            <person name="Granger D."/>
            <person name="Tettelin H."/>
            <person name="Dong H."/>
            <person name="Galvin J.L."/>
            <person name="Duncan M.J."/>
            <person name="Dewhirst F.E."/>
            <person name="Fraser C.M."/>
        </authorList>
    </citation>
    <scope>NUCLEOTIDE SEQUENCE [LARGE SCALE GENOMIC DNA]</scope>
    <source>
        <strain>ATCC BAA-308 / W83</strain>
    </source>
</reference>
<gene>
    <name evidence="1" type="primary">tal</name>
    <name type="ordered locus">PG_0230</name>
</gene>